<evidence type="ECO:0000255" key="1">
    <source>
        <dbReference type="HAMAP-Rule" id="MF_00500"/>
    </source>
</evidence>
<evidence type="ECO:0000256" key="2">
    <source>
        <dbReference type="SAM" id="MobiDB-lite"/>
    </source>
</evidence>
<evidence type="ECO:0000305" key="3"/>
<accession>A9NBL7</accession>
<sequence>MANSAQAKKRARQNEKRELHNASQRSAVRTAVKKILKSLQANDSSAAQSAYQHAVQILDKAAGRRIIHPNKAARLKSRLSQKIKNLSSSQ</sequence>
<organism>
    <name type="scientific">Coxiella burnetii (strain RSA 331 / Henzerling II)</name>
    <dbReference type="NCBI Taxonomy" id="360115"/>
    <lineage>
        <taxon>Bacteria</taxon>
        <taxon>Pseudomonadati</taxon>
        <taxon>Pseudomonadota</taxon>
        <taxon>Gammaproteobacteria</taxon>
        <taxon>Legionellales</taxon>
        <taxon>Coxiellaceae</taxon>
        <taxon>Coxiella</taxon>
    </lineage>
</organism>
<feature type="chain" id="PRO_1000081425" description="Small ribosomal subunit protein bS20">
    <location>
        <begin position="1"/>
        <end position="90"/>
    </location>
</feature>
<feature type="region of interest" description="Disordered" evidence="2">
    <location>
        <begin position="1"/>
        <end position="27"/>
    </location>
</feature>
<reference key="1">
    <citation type="submission" date="2007-11" db="EMBL/GenBank/DDBJ databases">
        <title>Genome sequencing of phylogenetically and phenotypically diverse Coxiella burnetii isolates.</title>
        <authorList>
            <person name="Seshadri R."/>
            <person name="Samuel J.E."/>
        </authorList>
    </citation>
    <scope>NUCLEOTIDE SEQUENCE [LARGE SCALE GENOMIC DNA]</scope>
    <source>
        <strain>RSA 331 / Henzerling II</strain>
    </source>
</reference>
<comment type="function">
    <text evidence="1">Binds directly to 16S ribosomal RNA.</text>
</comment>
<comment type="similarity">
    <text evidence="1">Belongs to the bacterial ribosomal protein bS20 family.</text>
</comment>
<gene>
    <name evidence="1" type="primary">rpsT</name>
    <name type="ordered locus">COXBURSA331_A0500</name>
</gene>
<name>RS20_COXBR</name>
<protein>
    <recommendedName>
        <fullName evidence="1">Small ribosomal subunit protein bS20</fullName>
    </recommendedName>
    <alternativeName>
        <fullName evidence="3">30S ribosomal protein S20</fullName>
    </alternativeName>
</protein>
<proteinExistence type="inferred from homology"/>
<dbReference type="EMBL" id="CP000890">
    <property type="protein sequence ID" value="ABX78252.1"/>
    <property type="molecule type" value="Genomic_DNA"/>
</dbReference>
<dbReference type="RefSeq" id="WP_005771970.1">
    <property type="nucleotide sequence ID" value="NC_010117.1"/>
</dbReference>
<dbReference type="SMR" id="A9NBL7"/>
<dbReference type="KEGG" id="cbs:COXBURSA331_A0500"/>
<dbReference type="HOGENOM" id="CLU_160655_4_0_6"/>
<dbReference type="GO" id="GO:0005829">
    <property type="term" value="C:cytosol"/>
    <property type="evidence" value="ECO:0007669"/>
    <property type="project" value="TreeGrafter"/>
</dbReference>
<dbReference type="GO" id="GO:0015935">
    <property type="term" value="C:small ribosomal subunit"/>
    <property type="evidence" value="ECO:0007669"/>
    <property type="project" value="TreeGrafter"/>
</dbReference>
<dbReference type="GO" id="GO:0070181">
    <property type="term" value="F:small ribosomal subunit rRNA binding"/>
    <property type="evidence" value="ECO:0007669"/>
    <property type="project" value="TreeGrafter"/>
</dbReference>
<dbReference type="GO" id="GO:0003735">
    <property type="term" value="F:structural constituent of ribosome"/>
    <property type="evidence" value="ECO:0007669"/>
    <property type="project" value="InterPro"/>
</dbReference>
<dbReference type="GO" id="GO:0006412">
    <property type="term" value="P:translation"/>
    <property type="evidence" value="ECO:0007669"/>
    <property type="project" value="UniProtKB-UniRule"/>
</dbReference>
<dbReference type="FunFam" id="1.20.58.110:FF:000001">
    <property type="entry name" value="30S ribosomal protein S20"/>
    <property type="match status" value="1"/>
</dbReference>
<dbReference type="Gene3D" id="1.20.58.110">
    <property type="entry name" value="Ribosomal protein S20"/>
    <property type="match status" value="1"/>
</dbReference>
<dbReference type="HAMAP" id="MF_00500">
    <property type="entry name" value="Ribosomal_bS20"/>
    <property type="match status" value="1"/>
</dbReference>
<dbReference type="InterPro" id="IPR002583">
    <property type="entry name" value="Ribosomal_bS20"/>
</dbReference>
<dbReference type="InterPro" id="IPR036510">
    <property type="entry name" value="Ribosomal_bS20_sf"/>
</dbReference>
<dbReference type="NCBIfam" id="TIGR00029">
    <property type="entry name" value="S20"/>
    <property type="match status" value="1"/>
</dbReference>
<dbReference type="PANTHER" id="PTHR33398">
    <property type="entry name" value="30S RIBOSOMAL PROTEIN S20"/>
    <property type="match status" value="1"/>
</dbReference>
<dbReference type="PANTHER" id="PTHR33398:SF1">
    <property type="entry name" value="SMALL RIBOSOMAL SUBUNIT PROTEIN BS20C"/>
    <property type="match status" value="1"/>
</dbReference>
<dbReference type="Pfam" id="PF01649">
    <property type="entry name" value="Ribosomal_S20p"/>
    <property type="match status" value="1"/>
</dbReference>
<dbReference type="SUPFAM" id="SSF46992">
    <property type="entry name" value="Ribosomal protein S20"/>
    <property type="match status" value="1"/>
</dbReference>
<keyword id="KW-0687">Ribonucleoprotein</keyword>
<keyword id="KW-0689">Ribosomal protein</keyword>
<keyword id="KW-0694">RNA-binding</keyword>
<keyword id="KW-0699">rRNA-binding</keyword>